<reference key="1">
    <citation type="journal article" date="2004" name="PLoS Biol.">
        <title>Genomic insights into methanotrophy: the complete genome sequence of Methylococcus capsulatus (Bath).</title>
        <authorList>
            <person name="Ward N.L."/>
            <person name="Larsen O."/>
            <person name="Sakwa J."/>
            <person name="Bruseth L."/>
            <person name="Khouri H.M."/>
            <person name="Durkin A.S."/>
            <person name="Dimitrov G."/>
            <person name="Jiang L."/>
            <person name="Scanlan D."/>
            <person name="Kang K.H."/>
            <person name="Lewis M.R."/>
            <person name="Nelson K.E."/>
            <person name="Methe B.A."/>
            <person name="Wu M."/>
            <person name="Heidelberg J.F."/>
            <person name="Paulsen I.T."/>
            <person name="Fouts D.E."/>
            <person name="Ravel J."/>
            <person name="Tettelin H."/>
            <person name="Ren Q."/>
            <person name="Read T.D."/>
            <person name="DeBoy R.T."/>
            <person name="Seshadri R."/>
            <person name="Salzberg S.L."/>
            <person name="Jensen H.B."/>
            <person name="Birkeland N.K."/>
            <person name="Nelson W.C."/>
            <person name="Dodson R.J."/>
            <person name="Grindhaug S.H."/>
            <person name="Holt I.E."/>
            <person name="Eidhammer I."/>
            <person name="Jonasen I."/>
            <person name="Vanaken S."/>
            <person name="Utterback T.R."/>
            <person name="Feldblyum T.V."/>
            <person name="Fraser C.M."/>
            <person name="Lillehaug J.R."/>
            <person name="Eisen J.A."/>
        </authorList>
    </citation>
    <scope>NUCLEOTIDE SEQUENCE [LARGE SCALE GENOMIC DNA]</scope>
    <source>
        <strain>ATCC 33009 / NCIMB 11132 / Bath</strain>
    </source>
</reference>
<comment type="function">
    <text evidence="1">Catalyzes the interconversion of methylthioribose-1-phosphate (MTR-1-P) into methylthioribulose-1-phosphate (MTRu-1-P).</text>
</comment>
<comment type="catalytic activity">
    <reaction evidence="1">
        <text>5-(methylsulfanyl)-alpha-D-ribose 1-phosphate = 5-(methylsulfanyl)-D-ribulose 1-phosphate</text>
        <dbReference type="Rhea" id="RHEA:19989"/>
        <dbReference type="ChEBI" id="CHEBI:58533"/>
        <dbReference type="ChEBI" id="CHEBI:58548"/>
        <dbReference type="EC" id="5.3.1.23"/>
    </reaction>
</comment>
<comment type="pathway">
    <text evidence="1">Amino-acid biosynthesis; L-methionine biosynthesis via salvage pathway; L-methionine from S-methyl-5-thio-alpha-D-ribose 1-phosphate: step 1/6.</text>
</comment>
<comment type="similarity">
    <text evidence="2">Belongs to the eIF-2B alpha/beta/delta subunits family. MtnA subfamily.</text>
</comment>
<evidence type="ECO:0000255" key="1">
    <source>
        <dbReference type="HAMAP-Rule" id="MF_01678"/>
    </source>
</evidence>
<evidence type="ECO:0000305" key="2"/>
<name>MTNA_METCA</name>
<keyword id="KW-0028">Amino-acid biosynthesis</keyword>
<keyword id="KW-0413">Isomerase</keyword>
<keyword id="KW-0486">Methionine biosynthesis</keyword>
<keyword id="KW-1185">Reference proteome</keyword>
<proteinExistence type="inferred from homology"/>
<feature type="chain" id="PRO_0000357205" description="Methylthioribose-1-phosphate isomerase">
    <location>
        <begin position="1"/>
        <end position="352"/>
    </location>
</feature>
<feature type="active site" description="Proton donor" evidence="1">
    <location>
        <position position="242"/>
    </location>
</feature>
<feature type="binding site" evidence="1">
    <location>
        <begin position="55"/>
        <end position="57"/>
    </location>
    <ligand>
        <name>substrate</name>
    </ligand>
</feature>
<feature type="binding site" evidence="1">
    <location>
        <position position="98"/>
    </location>
    <ligand>
        <name>substrate</name>
    </ligand>
</feature>
<feature type="binding site" evidence="1">
    <location>
        <position position="201"/>
    </location>
    <ligand>
        <name>substrate</name>
    </ligand>
</feature>
<feature type="binding site" evidence="1">
    <location>
        <begin position="252"/>
        <end position="253"/>
    </location>
    <ligand>
        <name>substrate</name>
    </ligand>
</feature>
<feature type="site" description="Transition state stabilizer" evidence="1">
    <location>
        <position position="162"/>
    </location>
</feature>
<protein>
    <recommendedName>
        <fullName evidence="1">Methylthioribose-1-phosphate isomerase</fullName>
        <shortName evidence="1">M1Pi</shortName>
        <shortName evidence="1">MTR-1-P isomerase</shortName>
        <ecNumber evidence="1">5.3.1.23</ecNumber>
    </recommendedName>
    <alternativeName>
        <fullName evidence="1">S-methyl-5-thioribose-1-phosphate isomerase</fullName>
    </alternativeName>
</protein>
<dbReference type="EC" id="5.3.1.23" evidence="1"/>
<dbReference type="EMBL" id="AE017282">
    <property type="protein sequence ID" value="AAU92002.1"/>
    <property type="molecule type" value="Genomic_DNA"/>
</dbReference>
<dbReference type="RefSeq" id="WP_010961219.1">
    <property type="nucleotide sequence ID" value="NC_002977.6"/>
</dbReference>
<dbReference type="SMR" id="Q606P2"/>
<dbReference type="STRING" id="243233.MCA1974"/>
<dbReference type="GeneID" id="88224204"/>
<dbReference type="KEGG" id="mca:MCA1974"/>
<dbReference type="eggNOG" id="COG0182">
    <property type="taxonomic scope" value="Bacteria"/>
</dbReference>
<dbReference type="HOGENOM" id="CLU_016218_1_2_6"/>
<dbReference type="UniPathway" id="UPA00904">
    <property type="reaction ID" value="UER00874"/>
</dbReference>
<dbReference type="Proteomes" id="UP000006821">
    <property type="component" value="Chromosome"/>
</dbReference>
<dbReference type="GO" id="GO:0046523">
    <property type="term" value="F:S-methyl-5-thioribose-1-phosphate isomerase activity"/>
    <property type="evidence" value="ECO:0007669"/>
    <property type="project" value="UniProtKB-UniRule"/>
</dbReference>
<dbReference type="GO" id="GO:0019509">
    <property type="term" value="P:L-methionine salvage from methylthioadenosine"/>
    <property type="evidence" value="ECO:0007669"/>
    <property type="project" value="UniProtKB-UniRule"/>
</dbReference>
<dbReference type="FunFam" id="1.20.120.420:FF:000003">
    <property type="entry name" value="Methylthioribose-1-phosphate isomerase"/>
    <property type="match status" value="1"/>
</dbReference>
<dbReference type="FunFam" id="3.40.50.10470:FF:000006">
    <property type="entry name" value="Methylthioribose-1-phosphate isomerase"/>
    <property type="match status" value="1"/>
</dbReference>
<dbReference type="Gene3D" id="1.20.120.420">
    <property type="entry name" value="translation initiation factor eif-2b, domain 1"/>
    <property type="match status" value="1"/>
</dbReference>
<dbReference type="Gene3D" id="3.40.50.10470">
    <property type="entry name" value="Translation initiation factor eif-2b, domain 2"/>
    <property type="match status" value="1"/>
</dbReference>
<dbReference type="HAMAP" id="MF_01678">
    <property type="entry name" value="Salvage_MtnA"/>
    <property type="match status" value="1"/>
</dbReference>
<dbReference type="InterPro" id="IPR000649">
    <property type="entry name" value="IF-2B-related"/>
</dbReference>
<dbReference type="InterPro" id="IPR005251">
    <property type="entry name" value="IF-M1Pi"/>
</dbReference>
<dbReference type="InterPro" id="IPR042529">
    <property type="entry name" value="IF_2B-like_C"/>
</dbReference>
<dbReference type="InterPro" id="IPR011559">
    <property type="entry name" value="Initiation_fac_2B_a/b/d"/>
</dbReference>
<dbReference type="InterPro" id="IPR027363">
    <property type="entry name" value="M1Pi_N"/>
</dbReference>
<dbReference type="InterPro" id="IPR037171">
    <property type="entry name" value="NagB/RpiA_transferase-like"/>
</dbReference>
<dbReference type="NCBIfam" id="TIGR00524">
    <property type="entry name" value="eIF-2B_rel"/>
    <property type="match status" value="1"/>
</dbReference>
<dbReference type="NCBIfam" id="NF004326">
    <property type="entry name" value="PRK05720.1"/>
    <property type="match status" value="1"/>
</dbReference>
<dbReference type="NCBIfam" id="TIGR00512">
    <property type="entry name" value="salvage_mtnA"/>
    <property type="match status" value="1"/>
</dbReference>
<dbReference type="PANTHER" id="PTHR43475">
    <property type="entry name" value="METHYLTHIORIBOSE-1-PHOSPHATE ISOMERASE"/>
    <property type="match status" value="1"/>
</dbReference>
<dbReference type="PANTHER" id="PTHR43475:SF1">
    <property type="entry name" value="METHYLTHIORIBOSE-1-PHOSPHATE ISOMERASE"/>
    <property type="match status" value="1"/>
</dbReference>
<dbReference type="Pfam" id="PF01008">
    <property type="entry name" value="IF-2B"/>
    <property type="match status" value="1"/>
</dbReference>
<dbReference type="SUPFAM" id="SSF100950">
    <property type="entry name" value="NagB/RpiA/CoA transferase-like"/>
    <property type="match status" value="1"/>
</dbReference>
<sequence length="352" mass="37081">MSDHSFSAVSAVQALKWSDGGLEVLDQRLLPGDVVYQIFDTAAGVAEAIASMRVRGAPAIGIAAAYGVVLGARAAYARDPAHWKRAVEDDIAVLARSRPTAVNLFWALERMREAMAAIEGDPVPALLAAARRIHEDDLAANLAMGELGAAILGGCKGVLTHCNTGALATGGYGTALGVIRSTWRRGALERVYATETRPWSQGARLTVWELGQDRIPATLLADSAAAWLMKSGAVQWVVVGADRIAANGDVANKIGTYSLAVLARHHGVKLMVVAPISTVDWATATGEDIVVEERDPRELLHPLFLGSDSVIGAWNPVFDVTPAALIDAIVTEAGVVTNPSPDTMATLRGKAR</sequence>
<accession>Q606P2</accession>
<gene>
    <name evidence="1" type="primary">mtnA</name>
    <name type="ordered locus">MCA1974</name>
</gene>
<organism>
    <name type="scientific">Methylococcus capsulatus (strain ATCC 33009 / NCIMB 11132 / Bath)</name>
    <dbReference type="NCBI Taxonomy" id="243233"/>
    <lineage>
        <taxon>Bacteria</taxon>
        <taxon>Pseudomonadati</taxon>
        <taxon>Pseudomonadota</taxon>
        <taxon>Gammaproteobacteria</taxon>
        <taxon>Methylococcales</taxon>
        <taxon>Methylococcaceae</taxon>
        <taxon>Methylococcus</taxon>
    </lineage>
</organism>